<sequence length="191" mass="21722">MTQQITLVKDKILSDNYFTLHNITYDLTRKDGEVIRHKREVYDRGNGATILLYNAKKKTVVLIRQFRVATWVNGNESGQLIETCAGLLDNDEPEVCIRKEAIEETGYEVGEVRKLFELYMSPGGVTELIHFFIAEYSDSQRANAGGGVEDEDIEVLELPFSQALEMIKTGEIRDGKTVLLLNYLQMSHLMD</sequence>
<feature type="chain" id="PRO_0000342488" description="GDP-mannose pyrophosphatase">
    <location>
        <begin position="1"/>
        <end position="191"/>
    </location>
</feature>
<feature type="domain" description="Nudix hydrolase" evidence="2">
    <location>
        <begin position="43"/>
        <end position="180"/>
    </location>
</feature>
<feature type="short sequence motif" description="Nudix box">
    <location>
        <begin position="86"/>
        <end position="106"/>
    </location>
</feature>
<feature type="binding site" description="in other chain" evidence="1">
    <location>
        <position position="17"/>
    </location>
    <ligand>
        <name>GDP-alpha-D-mannose</name>
        <dbReference type="ChEBI" id="CHEBI:57527"/>
        <note>ligand shared between dimeric partners</note>
    </ligand>
</feature>
<feature type="binding site" evidence="1">
    <location>
        <begin position="38"/>
        <end position="40"/>
    </location>
    <ligand>
        <name>GDP-alpha-D-mannose</name>
        <dbReference type="ChEBI" id="CHEBI:57527"/>
        <note>ligand shared between dimeric partners</note>
    </ligand>
</feature>
<feature type="binding site" description="in other chain" evidence="1">
    <location>
        <position position="67"/>
    </location>
    <ligand>
        <name>GDP-alpha-D-mannose</name>
        <dbReference type="ChEBI" id="CHEBI:57527"/>
        <note>ligand shared between dimeric partners</note>
    </ligand>
</feature>
<feature type="binding site" description="in other chain" evidence="1">
    <location>
        <begin position="85"/>
        <end position="87"/>
    </location>
    <ligand>
        <name>GDP-alpha-D-mannose</name>
        <dbReference type="ChEBI" id="CHEBI:57527"/>
        <note>ligand shared between dimeric partners</note>
    </ligand>
</feature>
<feature type="binding site" evidence="1">
    <location>
        <position position="85"/>
    </location>
    <ligand>
        <name>Mg(2+)</name>
        <dbReference type="ChEBI" id="CHEBI:18420"/>
        <label>1</label>
    </ligand>
</feature>
<feature type="binding site" evidence="1">
    <location>
        <position position="100"/>
    </location>
    <ligand>
        <name>Mg(2+)</name>
        <dbReference type="ChEBI" id="CHEBI:18420"/>
        <label>2</label>
    </ligand>
</feature>
<feature type="binding site" description="in other chain" evidence="1">
    <location>
        <position position="104"/>
    </location>
    <ligand>
        <name>GDP-alpha-D-mannose</name>
        <dbReference type="ChEBI" id="CHEBI:57527"/>
        <note>ligand shared between dimeric partners</note>
    </ligand>
</feature>
<feature type="binding site" evidence="1">
    <location>
        <position position="104"/>
    </location>
    <ligand>
        <name>Mg(2+)</name>
        <dbReference type="ChEBI" id="CHEBI:18420"/>
        <label>1</label>
    </ligand>
</feature>
<feature type="binding site" evidence="1">
    <location>
        <position position="104"/>
    </location>
    <ligand>
        <name>Mg(2+)</name>
        <dbReference type="ChEBI" id="CHEBI:18420"/>
        <label>2</label>
    </ligand>
</feature>
<feature type="binding site" description="in other chain" evidence="1">
    <location>
        <position position="127"/>
    </location>
    <ligand>
        <name>GDP-alpha-D-mannose</name>
        <dbReference type="ChEBI" id="CHEBI:57527"/>
        <note>ligand shared between dimeric partners</note>
    </ligand>
</feature>
<feature type="binding site" description="in other chain" evidence="1">
    <location>
        <begin position="150"/>
        <end position="151"/>
    </location>
    <ligand>
        <name>GDP-alpha-D-mannose</name>
        <dbReference type="ChEBI" id="CHEBI:57527"/>
        <note>ligand shared between dimeric partners</note>
    </ligand>
</feature>
<feature type="binding site" evidence="1">
    <location>
        <position position="151"/>
    </location>
    <ligand>
        <name>Mg(2+)</name>
        <dbReference type="ChEBI" id="CHEBI:18420"/>
        <label>2</label>
    </ligand>
</feature>
<feature type="binding site" description="in other chain" evidence="1">
    <location>
        <position position="176"/>
    </location>
    <ligand>
        <name>GDP-alpha-D-mannose</name>
        <dbReference type="ChEBI" id="CHEBI:57527"/>
        <note>ligand shared between dimeric partners</note>
    </ligand>
</feature>
<organism>
    <name type="scientific">Escherichia coli O1:K1 / APEC</name>
    <dbReference type="NCBI Taxonomy" id="405955"/>
    <lineage>
        <taxon>Bacteria</taxon>
        <taxon>Pseudomonadati</taxon>
        <taxon>Pseudomonadota</taxon>
        <taxon>Gammaproteobacteria</taxon>
        <taxon>Enterobacterales</taxon>
        <taxon>Enterobacteriaceae</taxon>
        <taxon>Escherichia</taxon>
    </lineage>
</organism>
<reference key="1">
    <citation type="journal article" date="2007" name="J. Bacteriol.">
        <title>The genome sequence of avian pathogenic Escherichia coli strain O1:K1:H7 shares strong similarities with human extraintestinal pathogenic E. coli genomes.</title>
        <authorList>
            <person name="Johnson T.J."/>
            <person name="Kariyawasam S."/>
            <person name="Wannemuehler Y."/>
            <person name="Mangiamele P."/>
            <person name="Johnson S.J."/>
            <person name="Doetkott C."/>
            <person name="Skyberg J.A."/>
            <person name="Lynne A.M."/>
            <person name="Johnson J.R."/>
            <person name="Nolan L.K."/>
        </authorList>
    </citation>
    <scope>NUCLEOTIDE SEQUENCE [LARGE SCALE GENOMIC DNA]</scope>
</reference>
<accession>A1ADX2</accession>
<evidence type="ECO:0000250" key="1">
    <source>
        <dbReference type="UniProtKB" id="P37128"/>
    </source>
</evidence>
<evidence type="ECO:0000255" key="2">
    <source>
        <dbReference type="PROSITE-ProRule" id="PRU00794"/>
    </source>
</evidence>
<evidence type="ECO:0000305" key="3"/>
<protein>
    <recommendedName>
        <fullName>GDP-mannose pyrophosphatase</fullName>
        <ecNumber evidence="1">3.6.1.-</ecNumber>
    </recommendedName>
    <alternativeName>
        <fullName>GDP-mannose hydrolase</fullName>
    </alternativeName>
    <alternativeName>
        <fullName>GDPMK</fullName>
    </alternativeName>
</protein>
<gene>
    <name type="primary">nudK</name>
    <name type="ordered locus">Ecok1_23680</name>
    <name type="ORF">APECO1_4090</name>
</gene>
<name>NUDK_ECOK1</name>
<keyword id="KW-0378">Hydrolase</keyword>
<keyword id="KW-0460">Magnesium</keyword>
<keyword id="KW-0479">Metal-binding</keyword>
<keyword id="KW-1185">Reference proteome</keyword>
<comment type="function">
    <text evidence="1">Nucleoside diphosphate sugar hydrolase that hydrolyzes GDP-mannose as its preferred substrate, yielding GMP and mannose-1-phosphate.</text>
</comment>
<comment type="catalytic activity">
    <reaction evidence="1">
        <text>GDP-alpha-D-mannose + H2O = alpha-D-mannose 1-phosphate + GMP + 2 H(+)</text>
        <dbReference type="Rhea" id="RHEA:27978"/>
        <dbReference type="ChEBI" id="CHEBI:15377"/>
        <dbReference type="ChEBI" id="CHEBI:15378"/>
        <dbReference type="ChEBI" id="CHEBI:57527"/>
        <dbReference type="ChEBI" id="CHEBI:58115"/>
        <dbReference type="ChEBI" id="CHEBI:58409"/>
    </reaction>
</comment>
<comment type="cofactor">
    <cofactor evidence="1">
        <name>Mg(2+)</name>
        <dbReference type="ChEBI" id="CHEBI:18420"/>
    </cofactor>
</comment>
<comment type="subunit">
    <text evidence="1">Homodimer.</text>
</comment>
<comment type="domain">
    <text evidence="1">In the dimer, the N-terminal domains are swapped between the two monomers, such that residues of both chains contribute to the active site.</text>
</comment>
<comment type="similarity">
    <text evidence="3">Belongs to the Nudix hydrolase family. NudK subfamily.</text>
</comment>
<proteinExistence type="inferred from homology"/>
<dbReference type="EC" id="3.6.1.-" evidence="1"/>
<dbReference type="EMBL" id="CP000468">
    <property type="protein sequence ID" value="ABJ01862.1"/>
    <property type="molecule type" value="Genomic_DNA"/>
</dbReference>
<dbReference type="RefSeq" id="WP_001296284.1">
    <property type="nucleotide sequence ID" value="NZ_CADILS010000040.1"/>
</dbReference>
<dbReference type="SMR" id="A1ADX2"/>
<dbReference type="KEGG" id="ecv:APECO1_4090"/>
<dbReference type="HOGENOM" id="CLU_062658_6_0_6"/>
<dbReference type="Proteomes" id="UP000008216">
    <property type="component" value="Chromosome"/>
</dbReference>
<dbReference type="GO" id="GO:0005829">
    <property type="term" value="C:cytosol"/>
    <property type="evidence" value="ECO:0007669"/>
    <property type="project" value="TreeGrafter"/>
</dbReference>
<dbReference type="GO" id="GO:0016818">
    <property type="term" value="F:hydrolase activity, acting on acid anhydrides, in phosphorus-containing anhydrides"/>
    <property type="evidence" value="ECO:0007669"/>
    <property type="project" value="InterPro"/>
</dbReference>
<dbReference type="GO" id="GO:0046872">
    <property type="term" value="F:metal ion binding"/>
    <property type="evidence" value="ECO:0007669"/>
    <property type="project" value="UniProtKB-KW"/>
</dbReference>
<dbReference type="GO" id="GO:0006753">
    <property type="term" value="P:nucleoside phosphate metabolic process"/>
    <property type="evidence" value="ECO:0007669"/>
    <property type="project" value="TreeGrafter"/>
</dbReference>
<dbReference type="GO" id="GO:0019693">
    <property type="term" value="P:ribose phosphate metabolic process"/>
    <property type="evidence" value="ECO:0007669"/>
    <property type="project" value="TreeGrafter"/>
</dbReference>
<dbReference type="CDD" id="cd24157">
    <property type="entry name" value="NUDIX_GDPMK"/>
    <property type="match status" value="1"/>
</dbReference>
<dbReference type="FunFam" id="3.90.79.10:FF:000010">
    <property type="entry name" value="GDP-mannose pyrophosphatase NudK"/>
    <property type="match status" value="1"/>
</dbReference>
<dbReference type="Gene3D" id="3.90.79.10">
    <property type="entry name" value="Nucleoside Triphosphate Pyrophosphohydrolase"/>
    <property type="match status" value="1"/>
</dbReference>
<dbReference type="InterPro" id="IPR004385">
    <property type="entry name" value="NDP_pyrophosphatase"/>
</dbReference>
<dbReference type="InterPro" id="IPR015797">
    <property type="entry name" value="NUDIX_hydrolase-like_dom_sf"/>
</dbReference>
<dbReference type="InterPro" id="IPR000086">
    <property type="entry name" value="NUDIX_hydrolase_dom"/>
</dbReference>
<dbReference type="NCBIfam" id="TIGR00052">
    <property type="entry name" value="nudix-type nucleoside diphosphatase, YffH/AdpP family"/>
    <property type="match status" value="1"/>
</dbReference>
<dbReference type="NCBIfam" id="NF011585">
    <property type="entry name" value="PRK15009.1"/>
    <property type="match status" value="1"/>
</dbReference>
<dbReference type="PANTHER" id="PTHR11839:SF18">
    <property type="entry name" value="NUDIX HYDROLASE DOMAIN-CONTAINING PROTEIN"/>
    <property type="match status" value="1"/>
</dbReference>
<dbReference type="PANTHER" id="PTHR11839">
    <property type="entry name" value="UDP/ADP-SUGAR PYROPHOSPHATASE"/>
    <property type="match status" value="1"/>
</dbReference>
<dbReference type="Pfam" id="PF00293">
    <property type="entry name" value="NUDIX"/>
    <property type="match status" value="1"/>
</dbReference>
<dbReference type="SUPFAM" id="SSF55811">
    <property type="entry name" value="Nudix"/>
    <property type="match status" value="1"/>
</dbReference>
<dbReference type="PROSITE" id="PS51462">
    <property type="entry name" value="NUDIX"/>
    <property type="match status" value="1"/>
</dbReference>